<comment type="function">
    <text evidence="1">Component of the proteasome core, a large protease complex with broad specificity involved in protein degradation.</text>
</comment>
<comment type="activity regulation">
    <text evidence="1">The formation of the proteasomal ATPase PAN-20S proteasome complex, via the docking of the C-termini of PAN into the intersubunit pockets in the alpha-rings, triggers opening of the gate for substrate entry. Interconversion between the open-gate and close-gate conformations leads to a dynamic regulation of the 20S proteasome proteolysis activity.</text>
</comment>
<comment type="subunit">
    <text evidence="1">The 20S proteasome core is composed of 14 alpha and 14 beta subunits that assemble into four stacked heptameric rings, resulting in a barrel-shaped structure. The two inner rings, each composed of seven catalytic beta subunits, are sandwiched by two outer rings, each composed of seven alpha subunits. The catalytic chamber with the active sites is on the inside of the barrel. Has a gated structure, the ends of the cylinder being occluded by the N-termini of the alpha-subunits. Is capped at one or both ends by the proteasome regulatory ATPase, PAN.</text>
</comment>
<comment type="subcellular location">
    <subcellularLocation>
        <location evidence="1">Cytoplasm</location>
    </subcellularLocation>
</comment>
<comment type="similarity">
    <text evidence="1">Belongs to the peptidase T1A family.</text>
</comment>
<keyword id="KW-0963">Cytoplasm</keyword>
<keyword id="KW-0647">Proteasome</keyword>
<keyword id="KW-1185">Reference proteome</keyword>
<organism>
    <name type="scientific">Thermococcus sibiricus (strain DSM 12597 / MM 739)</name>
    <dbReference type="NCBI Taxonomy" id="604354"/>
    <lineage>
        <taxon>Archaea</taxon>
        <taxon>Methanobacteriati</taxon>
        <taxon>Methanobacteriota</taxon>
        <taxon>Thermococci</taxon>
        <taxon>Thermococcales</taxon>
        <taxon>Thermococcaceae</taxon>
        <taxon>Thermococcus</taxon>
    </lineage>
</organism>
<feature type="chain" id="PRO_1000204866" description="Proteasome subunit alpha">
    <location>
        <begin position="1"/>
        <end position="260"/>
    </location>
</feature>
<feature type="region of interest" description="Disordered" evidence="2">
    <location>
        <begin position="241"/>
        <end position="260"/>
    </location>
</feature>
<feature type="compositionally biased region" description="Acidic residues" evidence="2">
    <location>
        <begin position="242"/>
        <end position="260"/>
    </location>
</feature>
<evidence type="ECO:0000255" key="1">
    <source>
        <dbReference type="HAMAP-Rule" id="MF_00289"/>
    </source>
</evidence>
<evidence type="ECO:0000256" key="2">
    <source>
        <dbReference type="SAM" id="MobiDB-lite"/>
    </source>
</evidence>
<name>PSA_THESM</name>
<protein>
    <recommendedName>
        <fullName evidence="1">Proteasome subunit alpha</fullName>
    </recommendedName>
    <alternativeName>
        <fullName evidence="1">20S proteasome alpha subunit</fullName>
    </alternativeName>
    <alternativeName>
        <fullName evidence="1">Proteasome core protein PsmA</fullName>
    </alternativeName>
</protein>
<proteinExistence type="inferred from homology"/>
<dbReference type="EMBL" id="CP001463">
    <property type="protein sequence ID" value="ACS90404.1"/>
    <property type="molecule type" value="Genomic_DNA"/>
</dbReference>
<dbReference type="RefSeq" id="WP_015849622.1">
    <property type="nucleotide sequence ID" value="NC_012883.1"/>
</dbReference>
<dbReference type="SMR" id="C6A459"/>
<dbReference type="STRING" id="604354.TSIB_1352"/>
<dbReference type="MEROPS" id="T01.970"/>
<dbReference type="GeneID" id="8096353"/>
<dbReference type="KEGG" id="tsi:TSIB_1352"/>
<dbReference type="eggNOG" id="arCOG00971">
    <property type="taxonomic scope" value="Archaea"/>
</dbReference>
<dbReference type="HOGENOM" id="CLU_035750_4_1_2"/>
<dbReference type="OrthoDB" id="9421at2157"/>
<dbReference type="Proteomes" id="UP000009079">
    <property type="component" value="Chromosome"/>
</dbReference>
<dbReference type="GO" id="GO:0005737">
    <property type="term" value="C:cytoplasm"/>
    <property type="evidence" value="ECO:0007669"/>
    <property type="project" value="UniProtKB-SubCell"/>
</dbReference>
<dbReference type="GO" id="GO:0019773">
    <property type="term" value="C:proteasome core complex, alpha-subunit complex"/>
    <property type="evidence" value="ECO:0000250"/>
    <property type="project" value="UniProtKB"/>
</dbReference>
<dbReference type="GO" id="GO:0004298">
    <property type="term" value="F:threonine-type endopeptidase activity"/>
    <property type="evidence" value="ECO:0007669"/>
    <property type="project" value="InterPro"/>
</dbReference>
<dbReference type="GO" id="GO:0010498">
    <property type="term" value="P:proteasomal protein catabolic process"/>
    <property type="evidence" value="ECO:0007669"/>
    <property type="project" value="UniProtKB-UniRule"/>
</dbReference>
<dbReference type="GO" id="GO:0006511">
    <property type="term" value="P:ubiquitin-dependent protein catabolic process"/>
    <property type="evidence" value="ECO:0007669"/>
    <property type="project" value="InterPro"/>
</dbReference>
<dbReference type="CDD" id="cd03756">
    <property type="entry name" value="proteasome_alpha_archeal"/>
    <property type="match status" value="1"/>
</dbReference>
<dbReference type="FunFam" id="3.60.20.10:FF:000004">
    <property type="entry name" value="Proteasome subunit alpha type-4"/>
    <property type="match status" value="1"/>
</dbReference>
<dbReference type="Gene3D" id="3.60.20.10">
    <property type="entry name" value="Glutamine Phosphoribosylpyrophosphate, subunit 1, domain 1"/>
    <property type="match status" value="1"/>
</dbReference>
<dbReference type="HAMAP" id="MF_00289_A">
    <property type="entry name" value="Proteasome_A_A"/>
    <property type="match status" value="1"/>
</dbReference>
<dbReference type="InterPro" id="IPR029055">
    <property type="entry name" value="Ntn_hydrolases_N"/>
</dbReference>
<dbReference type="InterPro" id="IPR050115">
    <property type="entry name" value="Proteasome_alpha"/>
</dbReference>
<dbReference type="InterPro" id="IPR023332">
    <property type="entry name" value="Proteasome_alpha-type"/>
</dbReference>
<dbReference type="InterPro" id="IPR019982">
    <property type="entry name" value="Proteasome_asu_arc"/>
</dbReference>
<dbReference type="InterPro" id="IPR000426">
    <property type="entry name" value="Proteasome_asu_N"/>
</dbReference>
<dbReference type="InterPro" id="IPR001353">
    <property type="entry name" value="Proteasome_sua/b"/>
</dbReference>
<dbReference type="NCBIfam" id="TIGR03633">
    <property type="entry name" value="arc_protsome_A"/>
    <property type="match status" value="1"/>
</dbReference>
<dbReference type="NCBIfam" id="NF003075">
    <property type="entry name" value="PRK03996.1"/>
    <property type="match status" value="1"/>
</dbReference>
<dbReference type="PANTHER" id="PTHR11599">
    <property type="entry name" value="PROTEASOME SUBUNIT ALPHA/BETA"/>
    <property type="match status" value="1"/>
</dbReference>
<dbReference type="Pfam" id="PF00227">
    <property type="entry name" value="Proteasome"/>
    <property type="match status" value="1"/>
</dbReference>
<dbReference type="Pfam" id="PF10584">
    <property type="entry name" value="Proteasome_A_N"/>
    <property type="match status" value="1"/>
</dbReference>
<dbReference type="SMART" id="SM00948">
    <property type="entry name" value="Proteasome_A_N"/>
    <property type="match status" value="1"/>
</dbReference>
<dbReference type="SUPFAM" id="SSF56235">
    <property type="entry name" value="N-terminal nucleophile aminohydrolases (Ntn hydrolases)"/>
    <property type="match status" value="1"/>
</dbReference>
<dbReference type="PROSITE" id="PS51475">
    <property type="entry name" value="PROTEASOME_ALPHA_2"/>
    <property type="match status" value="1"/>
</dbReference>
<sequence>MAFVPPQAGYDRAITVFSPDGRLFQVQYAREAVKRGATAVGVKCKDGVVLAVEKRVTSKLIEPESYEKIFQIDDHIAAASSGIIADARVLVDRARLEAQIYRLTYGEPVPLTVLVKKICDLKQMHTQYGGVRPFGAALLMAGVNEKPELFETDPSGAYFEWKAVAIGSGRNTAMAIFEEKYRDEMTLEEAIKLAVLALSKIMEEPSPESIEVAVISVKEKKFKKITPEEVAKCLEEALKEVEAEEVPEKEEDYSELDSNY</sequence>
<gene>
    <name evidence="1" type="primary">psmA</name>
    <name type="ordered locus">TSIB_1352</name>
</gene>
<reference key="1">
    <citation type="journal article" date="2009" name="Appl. Environ. Microbiol.">
        <title>Metabolic versatility and indigenous origin of the archaeon Thermococcus sibiricus, isolated from a siberian oil reservoir, as revealed by genome analysis.</title>
        <authorList>
            <person name="Mardanov A.V."/>
            <person name="Ravin N.V."/>
            <person name="Svetlitchnyi V.A."/>
            <person name="Beletsky A.V."/>
            <person name="Miroshnichenko M.L."/>
            <person name="Bonch-Osmolovskaya E.A."/>
            <person name="Skryabin K.G."/>
        </authorList>
    </citation>
    <scope>NUCLEOTIDE SEQUENCE [LARGE SCALE GENOMIC DNA]</scope>
    <source>
        <strain>DSM 12597 / MM 739</strain>
    </source>
</reference>
<accession>C6A459</accession>